<feature type="chain" id="PRO_0000409687" description="Protein YIM1">
    <location>
        <begin position="1"/>
        <end position="365"/>
    </location>
</feature>
<name>YIM1_YEASV</name>
<protein>
    <recommendedName>
        <fullName>Protein YIM1</fullName>
    </recommendedName>
</protein>
<comment type="subcellular location">
    <subcellularLocation>
        <location evidence="1">Lipid droplet</location>
    </subcellularLocation>
    <subcellularLocation>
        <location evidence="1">Mitochondrion</location>
    </subcellularLocation>
</comment>
<comment type="similarity">
    <text evidence="2">Belongs to the YIM1 family.</text>
</comment>
<proteinExistence type="inferred from homology"/>
<reference key="1">
    <citation type="journal article" date="2011" name="PLoS Genet.">
        <title>Whole-genome comparison reveals novel genetic elements that characterize the genome of industrial strains of Saccharomyces cerevisiae.</title>
        <authorList>
            <person name="Borneman A.R."/>
            <person name="Desany B.A."/>
            <person name="Riches D."/>
            <person name="Affourtit J.P."/>
            <person name="Forgan A.H."/>
            <person name="Pretorius I.S."/>
            <person name="Egholm M."/>
            <person name="Chambers P.J."/>
        </authorList>
    </citation>
    <scope>NUCLEOTIDE SEQUENCE [LARGE SCALE GENOMIC DNA]</scope>
    <source>
        <strain>VIN 13</strain>
    </source>
</reference>
<evidence type="ECO:0000250" key="1"/>
<evidence type="ECO:0000305" key="2"/>
<keyword id="KW-0551">Lipid droplet</keyword>
<keyword id="KW-0496">Mitochondrion</keyword>
<accession>E7LYS5</accession>
<gene>
    <name type="primary">YIM1</name>
    <name type="ORF">VIN13_3725</name>
</gene>
<organism>
    <name type="scientific">Saccharomyces cerevisiae (strain VIN 13)</name>
    <name type="common">Baker's yeast</name>
    <dbReference type="NCBI Taxonomy" id="764099"/>
    <lineage>
        <taxon>Eukaryota</taxon>
        <taxon>Fungi</taxon>
        <taxon>Dikarya</taxon>
        <taxon>Ascomycota</taxon>
        <taxon>Saccharomycotina</taxon>
        <taxon>Saccharomycetes</taxon>
        <taxon>Saccharomycetales</taxon>
        <taxon>Saccharomycetaceae</taxon>
        <taxon>Saccharomyces</taxon>
    </lineage>
</organism>
<dbReference type="EMBL" id="ADXC01000061">
    <property type="protein sequence ID" value="EGA77383.1"/>
    <property type="molecule type" value="Genomic_DNA"/>
</dbReference>
<dbReference type="SMR" id="E7LYS5"/>
<dbReference type="HOGENOM" id="CLU_026673_3_3_1"/>
<dbReference type="OMA" id="GPLTYFT"/>
<dbReference type="GO" id="GO:0005811">
    <property type="term" value="C:lipid droplet"/>
    <property type="evidence" value="ECO:0007669"/>
    <property type="project" value="UniProtKB-SubCell"/>
</dbReference>
<dbReference type="GO" id="GO:0005739">
    <property type="term" value="C:mitochondrion"/>
    <property type="evidence" value="ECO:0007669"/>
    <property type="project" value="UniProtKB-SubCell"/>
</dbReference>
<dbReference type="CDD" id="cd08247">
    <property type="entry name" value="AST1_like"/>
    <property type="match status" value="1"/>
</dbReference>
<dbReference type="Gene3D" id="3.90.180.10">
    <property type="entry name" value="Medium-chain alcohol dehydrogenases, catalytic domain"/>
    <property type="match status" value="1"/>
</dbReference>
<dbReference type="Gene3D" id="3.40.50.720">
    <property type="entry name" value="NAD(P)-binding Rossmann-like Domain"/>
    <property type="match status" value="1"/>
</dbReference>
<dbReference type="InterPro" id="IPR013154">
    <property type="entry name" value="ADH-like_N"/>
</dbReference>
<dbReference type="InterPro" id="IPR011032">
    <property type="entry name" value="GroES-like_sf"/>
</dbReference>
<dbReference type="InterPro" id="IPR036291">
    <property type="entry name" value="NAD(P)-bd_dom_sf"/>
</dbReference>
<dbReference type="InterPro" id="IPR050700">
    <property type="entry name" value="YIM1/Zinc_Alcohol_DH_Fams"/>
</dbReference>
<dbReference type="PANTHER" id="PTHR11695">
    <property type="entry name" value="ALCOHOL DEHYDROGENASE RELATED"/>
    <property type="match status" value="1"/>
</dbReference>
<dbReference type="PANTHER" id="PTHR11695:SF294">
    <property type="entry name" value="RETICULON-4-INTERACTING PROTEIN 1, MITOCHONDRIAL"/>
    <property type="match status" value="1"/>
</dbReference>
<dbReference type="Pfam" id="PF08240">
    <property type="entry name" value="ADH_N"/>
    <property type="match status" value="1"/>
</dbReference>
<dbReference type="Pfam" id="PF13602">
    <property type="entry name" value="ADH_zinc_N_2"/>
    <property type="match status" value="1"/>
</dbReference>
<dbReference type="SUPFAM" id="SSF50129">
    <property type="entry name" value="GroES-like"/>
    <property type="match status" value="1"/>
</dbReference>
<dbReference type="SUPFAM" id="SSF51735">
    <property type="entry name" value="NAD(P)-binding Rossmann-fold domains"/>
    <property type="match status" value="1"/>
</dbReference>
<sequence>MSDEIVTNKSVTYVNNTTPVTITSSELDLRSCYQDDEVVIEVHAAALNPIDFITHQLCNSYIFGKYPKTYSRDYSGVIIKAGKDVDNRWKVGDKVNGMYSHIYGERGTLTHYLILNPAKDIPITHMVEVPKDENDPYDDFVYAAAWPLTFGTAFSTLYDFKKDWTSDSKVLVIGASTSVSYAFVHIAKNYFNIGTVVGICSKNSIERNKKLGYDYLVPYDEGSIVENVKKLKQIVLENDKFDMIFDSVGNHDFFPVIDQFLKPKAKNSFYVTIAGNNKANYKNISWRDFVSLSSILKAINPFKKYNWRFGHPYPPNNFIEVGNEMIKKGTYKPPIDSVYEFDQYKEAIDRLMSNRAKGKVVVKMK</sequence>